<accession>Q6AZN8</accession>
<feature type="chain" id="PRO_0000312577" description="Zinc transporter 6-A">
    <location>
        <begin position="1"/>
        <end position="464"/>
    </location>
</feature>
<feature type="topological domain" description="Cytoplasmic" evidence="2">
    <location>
        <begin position="1"/>
        <end position="33"/>
    </location>
</feature>
<feature type="transmembrane region" description="Helical" evidence="2">
    <location>
        <begin position="34"/>
        <end position="54"/>
    </location>
</feature>
<feature type="topological domain" description="Extracellular" evidence="2">
    <location>
        <begin position="55"/>
        <end position="64"/>
    </location>
</feature>
<feature type="transmembrane region" description="Helical" evidence="2">
    <location>
        <begin position="65"/>
        <end position="85"/>
    </location>
</feature>
<feature type="topological domain" description="Cytoplasmic" evidence="2">
    <location>
        <begin position="86"/>
        <end position="98"/>
    </location>
</feature>
<feature type="transmembrane region" description="Helical" evidence="2">
    <location>
        <begin position="99"/>
        <end position="119"/>
    </location>
</feature>
<feature type="topological domain" description="Extracellular" evidence="2">
    <location>
        <begin position="120"/>
        <end position="134"/>
    </location>
</feature>
<feature type="transmembrane region" description="Helical" evidence="2">
    <location>
        <begin position="135"/>
        <end position="155"/>
    </location>
</feature>
<feature type="topological domain" description="Cytoplasmic" evidence="2">
    <location>
        <begin position="156"/>
        <end position="200"/>
    </location>
</feature>
<feature type="transmembrane region" description="Helical" evidence="2">
    <location>
        <begin position="201"/>
        <end position="221"/>
    </location>
</feature>
<feature type="topological domain" description="Extracellular" evidence="2">
    <location>
        <begin position="222"/>
        <end position="223"/>
    </location>
</feature>
<feature type="transmembrane region" description="Helical" evidence="2">
    <location>
        <begin position="224"/>
        <end position="244"/>
    </location>
</feature>
<feature type="topological domain" description="Cytoplasmic" evidence="2">
    <location>
        <begin position="245"/>
        <end position="464"/>
    </location>
</feature>
<name>ZNT6A_XENLA</name>
<gene>
    <name type="primary">slc30a6-a</name>
    <name type="synonym">znt6-a</name>
</gene>
<protein>
    <recommendedName>
        <fullName>Zinc transporter 6-A</fullName>
        <shortName>ZnT-6-A</shortName>
    </recommendedName>
    <alternativeName>
        <fullName>Solute carrier family 30 member 6-A</fullName>
    </alternativeName>
</protein>
<sequence length="464" mass="51490">MGTIYLFRKTQRSLLGKLAQEFRLVTADRRSWKILLFGAINVVCTAFLLTWCSSTNSMALTAYTYLTIFDLFSLITSLISYWVTMKKPSPTYSFGFERFEVLAVFASTVLAQLGALFILKESAERFIEQPEIHTGRLLVGTFVALFFNLFTMLSIRNKPFAYVSDAASTSWLQEHVADLSRSLCGIIPGLSSIFLPRMNPFVLIDIAGALALCITYMLIEINNYFAVDTASAVAIAVMTFGTMYPMSVYSGKVLLQTTPPHVIGQLDKLLREVSTLDGVLEVRNEHFWTLGFGTMAGSVHVRIRRDANEQMVLAHVTNRLSTLVSTLTVQIFKDDWARPVLASGTMPPNMLNIPEHHVIQMPSLKSTIDELNPLTSTPSKPSSPPPEFAFNTPGKNMNPVILSNNQMRPFGVGYNYGTTPYTTTFNQGLGVPGVGNTQGLRTGLTNVANRYGTYTPGQFTQFRQ</sequence>
<evidence type="ECO:0000250" key="1">
    <source>
        <dbReference type="UniProtKB" id="Q6NXT4"/>
    </source>
</evidence>
<evidence type="ECO:0000255" key="2"/>
<evidence type="ECO:0000305" key="3"/>
<comment type="function">
    <text evidence="1">Has probably no intrinsic transporter activity but together with SLC30A5 forms a functional zinc ion:proton antiporter heterodimer, mediating zinc entry into the lumen of organelles along the secretory pathway. As part of that zinc ion:proton antiporter, contributes to zinc ion homeostasis within the early secretory pathway and regulates the activation and folding of enzymes like alkaline phosphatases and enzymes involved in phosphatidylinositol glycan anchor biosynthesis.</text>
</comment>
<comment type="subunit">
    <text evidence="1">Heterodimer with SLC30A5; form a functional zinc ion transmembrane transporter.</text>
</comment>
<comment type="subcellular location">
    <subcellularLocation>
        <location evidence="1">Golgi apparatus</location>
        <location evidence="1">trans-Golgi network membrane</location>
        <topology evidence="2">Multi-pass membrane protein</topology>
    </subcellularLocation>
</comment>
<comment type="similarity">
    <text evidence="3">Belongs to the cation diffusion facilitator (CDF) transporter (TC 2.A.4) family. SLC30A subfamily.</text>
</comment>
<comment type="caution">
    <text evidence="1">Hydrophilic histidine residues that participate to zinc binding in transporters of the family are not conserved in SLC30A6.</text>
</comment>
<dbReference type="EMBL" id="BC077520">
    <property type="protein sequence ID" value="AAH77520.1"/>
    <property type="molecule type" value="mRNA"/>
</dbReference>
<dbReference type="RefSeq" id="NP_001086831.1">
    <property type="nucleotide sequence ID" value="NM_001093362.1"/>
</dbReference>
<dbReference type="SMR" id="Q6AZN8"/>
<dbReference type="DNASU" id="446666"/>
<dbReference type="GeneID" id="446666"/>
<dbReference type="KEGG" id="xla:446666"/>
<dbReference type="AGR" id="Xenbase:XB-GENE-6256667"/>
<dbReference type="CTD" id="446666"/>
<dbReference type="Xenbase" id="XB-GENE-6256667">
    <property type="gene designation" value="slc30a6.L"/>
</dbReference>
<dbReference type="OrthoDB" id="5382797at2759"/>
<dbReference type="Proteomes" id="UP000186698">
    <property type="component" value="Chromosome 5L"/>
</dbReference>
<dbReference type="Bgee" id="446666">
    <property type="expression patterns" value="Expressed in egg cell and 19 other cell types or tissues"/>
</dbReference>
<dbReference type="GO" id="GO:0005794">
    <property type="term" value="C:Golgi apparatus"/>
    <property type="evidence" value="ECO:0000318"/>
    <property type="project" value="GO_Central"/>
</dbReference>
<dbReference type="GO" id="GO:0032588">
    <property type="term" value="C:trans-Golgi network membrane"/>
    <property type="evidence" value="ECO:0000250"/>
    <property type="project" value="UniProtKB"/>
</dbReference>
<dbReference type="GO" id="GO:0008324">
    <property type="term" value="F:monoatomic cation transmembrane transporter activity"/>
    <property type="evidence" value="ECO:0007669"/>
    <property type="project" value="InterPro"/>
</dbReference>
<dbReference type="GO" id="GO:1904257">
    <property type="term" value="P:zinc ion import into Golgi lumen"/>
    <property type="evidence" value="ECO:0000250"/>
    <property type="project" value="UniProtKB"/>
</dbReference>
<dbReference type="GO" id="GO:0006829">
    <property type="term" value="P:zinc ion transport"/>
    <property type="evidence" value="ECO:0000318"/>
    <property type="project" value="GO_Central"/>
</dbReference>
<dbReference type="FunFam" id="1.20.1510.10:FF:000009">
    <property type="entry name" value="zinc transporter 6 isoform X1"/>
    <property type="match status" value="1"/>
</dbReference>
<dbReference type="Gene3D" id="1.20.1510.10">
    <property type="entry name" value="Cation efflux protein transmembrane domain"/>
    <property type="match status" value="1"/>
</dbReference>
<dbReference type="InterPro" id="IPR002524">
    <property type="entry name" value="Cation_efflux"/>
</dbReference>
<dbReference type="InterPro" id="IPR027469">
    <property type="entry name" value="Cation_efflux_TMD_sf"/>
</dbReference>
<dbReference type="InterPro" id="IPR052005">
    <property type="entry name" value="CDF_SLC30A"/>
</dbReference>
<dbReference type="NCBIfam" id="TIGR01297">
    <property type="entry name" value="CDF"/>
    <property type="match status" value="1"/>
</dbReference>
<dbReference type="PANTHER" id="PTHR46531">
    <property type="entry name" value="ZINC TRANSPORTER 6"/>
    <property type="match status" value="1"/>
</dbReference>
<dbReference type="PANTHER" id="PTHR46531:SF1">
    <property type="entry name" value="ZINC TRANSPORTER 6"/>
    <property type="match status" value="1"/>
</dbReference>
<dbReference type="Pfam" id="PF01545">
    <property type="entry name" value="Cation_efflux"/>
    <property type="match status" value="1"/>
</dbReference>
<dbReference type="SUPFAM" id="SSF161111">
    <property type="entry name" value="Cation efflux protein transmembrane domain-like"/>
    <property type="match status" value="1"/>
</dbReference>
<keyword id="KW-0333">Golgi apparatus</keyword>
<keyword id="KW-0406">Ion transport</keyword>
<keyword id="KW-0472">Membrane</keyword>
<keyword id="KW-1185">Reference proteome</keyword>
<keyword id="KW-0812">Transmembrane</keyword>
<keyword id="KW-1133">Transmembrane helix</keyword>
<keyword id="KW-0813">Transport</keyword>
<keyword id="KW-0862">Zinc</keyword>
<keyword id="KW-0864">Zinc transport</keyword>
<reference key="1">
    <citation type="submission" date="2004-07" db="EMBL/GenBank/DDBJ databases">
        <authorList>
            <consortium name="NIH - Xenopus Gene Collection (XGC) project"/>
        </authorList>
    </citation>
    <scope>NUCLEOTIDE SEQUENCE [LARGE SCALE MRNA]</scope>
    <source>
        <tissue>Ovary</tissue>
    </source>
</reference>
<organism>
    <name type="scientific">Xenopus laevis</name>
    <name type="common">African clawed frog</name>
    <dbReference type="NCBI Taxonomy" id="8355"/>
    <lineage>
        <taxon>Eukaryota</taxon>
        <taxon>Metazoa</taxon>
        <taxon>Chordata</taxon>
        <taxon>Craniata</taxon>
        <taxon>Vertebrata</taxon>
        <taxon>Euteleostomi</taxon>
        <taxon>Amphibia</taxon>
        <taxon>Batrachia</taxon>
        <taxon>Anura</taxon>
        <taxon>Pipoidea</taxon>
        <taxon>Pipidae</taxon>
        <taxon>Xenopodinae</taxon>
        <taxon>Xenopus</taxon>
        <taxon>Xenopus</taxon>
    </lineage>
</organism>
<proteinExistence type="evidence at transcript level"/>